<feature type="chain" id="PRO_0000332578" description="Ribonuclease H">
    <location>
        <begin position="1"/>
        <end position="164"/>
    </location>
</feature>
<feature type="domain" description="RNase H type-1" evidence="2">
    <location>
        <begin position="9"/>
        <end position="150"/>
    </location>
</feature>
<feature type="binding site" evidence="1">
    <location>
        <position position="18"/>
    </location>
    <ligand>
        <name>Mg(2+)</name>
        <dbReference type="ChEBI" id="CHEBI:18420"/>
        <label>1</label>
    </ligand>
</feature>
<feature type="binding site" evidence="1">
    <location>
        <position position="18"/>
    </location>
    <ligand>
        <name>Mg(2+)</name>
        <dbReference type="ChEBI" id="CHEBI:18420"/>
        <label>2</label>
    </ligand>
</feature>
<feature type="binding site" evidence="1">
    <location>
        <position position="56"/>
    </location>
    <ligand>
        <name>Mg(2+)</name>
        <dbReference type="ChEBI" id="CHEBI:18420"/>
        <label>1</label>
    </ligand>
</feature>
<feature type="binding site" evidence="1">
    <location>
        <position position="78"/>
    </location>
    <ligand>
        <name>Mg(2+)</name>
        <dbReference type="ChEBI" id="CHEBI:18420"/>
        <label>1</label>
    </ligand>
</feature>
<feature type="binding site" evidence="1">
    <location>
        <position position="142"/>
    </location>
    <ligand>
        <name>Mg(2+)</name>
        <dbReference type="ChEBI" id="CHEBI:18420"/>
        <label>2</label>
    </ligand>
</feature>
<organism>
    <name type="scientific">Chromohalobacter salexigens (strain ATCC BAA-138 / DSM 3043 / CIP 106854 / NCIMB 13768 / 1H11)</name>
    <dbReference type="NCBI Taxonomy" id="290398"/>
    <lineage>
        <taxon>Bacteria</taxon>
        <taxon>Pseudomonadati</taxon>
        <taxon>Pseudomonadota</taxon>
        <taxon>Gammaproteobacteria</taxon>
        <taxon>Oceanospirillales</taxon>
        <taxon>Halomonadaceae</taxon>
        <taxon>Chromohalobacter</taxon>
    </lineage>
</organism>
<protein>
    <recommendedName>
        <fullName evidence="1">Ribonuclease H</fullName>
        <shortName evidence="1">RNase H</shortName>
        <ecNumber evidence="1">3.1.26.4</ecNumber>
    </recommendedName>
</protein>
<evidence type="ECO:0000255" key="1">
    <source>
        <dbReference type="HAMAP-Rule" id="MF_00042"/>
    </source>
</evidence>
<evidence type="ECO:0000255" key="2">
    <source>
        <dbReference type="PROSITE-ProRule" id="PRU00408"/>
    </source>
</evidence>
<sequence>MTDSHATGDMPRVTIYTDGACRGNPGPGGWGAVLRYGQHEKTLKGGEAVTTNNRMELMAAIQALRTLTRACDVALWTDSEYLRKGITEWIHGWVKRGWKTAAKQPVKNAELWRELLAETQRHRIEWHWVKGHSGHEGNELADTLANAATDEIQAAKRQAMAGEQ</sequence>
<proteinExistence type="inferred from homology"/>
<dbReference type="EC" id="3.1.26.4" evidence="1"/>
<dbReference type="EMBL" id="CP000285">
    <property type="protein sequence ID" value="ABE59294.1"/>
    <property type="molecule type" value="Genomic_DNA"/>
</dbReference>
<dbReference type="SMR" id="Q1QW64"/>
<dbReference type="STRING" id="290398.Csal_1942"/>
<dbReference type="KEGG" id="csa:Csal_1942"/>
<dbReference type="eggNOG" id="COG0328">
    <property type="taxonomic scope" value="Bacteria"/>
</dbReference>
<dbReference type="HOGENOM" id="CLU_030894_6_0_6"/>
<dbReference type="Proteomes" id="UP000000239">
    <property type="component" value="Chromosome"/>
</dbReference>
<dbReference type="GO" id="GO:0005737">
    <property type="term" value="C:cytoplasm"/>
    <property type="evidence" value="ECO:0007669"/>
    <property type="project" value="UniProtKB-SubCell"/>
</dbReference>
<dbReference type="GO" id="GO:0000287">
    <property type="term" value="F:magnesium ion binding"/>
    <property type="evidence" value="ECO:0007669"/>
    <property type="project" value="UniProtKB-UniRule"/>
</dbReference>
<dbReference type="GO" id="GO:0003676">
    <property type="term" value="F:nucleic acid binding"/>
    <property type="evidence" value="ECO:0007669"/>
    <property type="project" value="InterPro"/>
</dbReference>
<dbReference type="GO" id="GO:0004523">
    <property type="term" value="F:RNA-DNA hybrid ribonuclease activity"/>
    <property type="evidence" value="ECO:0007669"/>
    <property type="project" value="UniProtKB-UniRule"/>
</dbReference>
<dbReference type="GO" id="GO:0043137">
    <property type="term" value="P:DNA replication, removal of RNA primer"/>
    <property type="evidence" value="ECO:0007669"/>
    <property type="project" value="TreeGrafter"/>
</dbReference>
<dbReference type="CDD" id="cd09278">
    <property type="entry name" value="RNase_HI_prokaryote_like"/>
    <property type="match status" value="1"/>
</dbReference>
<dbReference type="FunFam" id="3.30.420.10:FF:000089">
    <property type="entry name" value="Ribonuclease H"/>
    <property type="match status" value="1"/>
</dbReference>
<dbReference type="Gene3D" id="3.30.420.10">
    <property type="entry name" value="Ribonuclease H-like superfamily/Ribonuclease H"/>
    <property type="match status" value="1"/>
</dbReference>
<dbReference type="HAMAP" id="MF_00042">
    <property type="entry name" value="RNase_H"/>
    <property type="match status" value="1"/>
</dbReference>
<dbReference type="InterPro" id="IPR050092">
    <property type="entry name" value="RNase_H"/>
</dbReference>
<dbReference type="InterPro" id="IPR012337">
    <property type="entry name" value="RNaseH-like_sf"/>
</dbReference>
<dbReference type="InterPro" id="IPR002156">
    <property type="entry name" value="RNaseH_domain"/>
</dbReference>
<dbReference type="InterPro" id="IPR036397">
    <property type="entry name" value="RNaseH_sf"/>
</dbReference>
<dbReference type="InterPro" id="IPR022892">
    <property type="entry name" value="RNaseHI"/>
</dbReference>
<dbReference type="NCBIfam" id="NF001236">
    <property type="entry name" value="PRK00203.1"/>
    <property type="match status" value="1"/>
</dbReference>
<dbReference type="PANTHER" id="PTHR10642">
    <property type="entry name" value="RIBONUCLEASE H1"/>
    <property type="match status" value="1"/>
</dbReference>
<dbReference type="PANTHER" id="PTHR10642:SF26">
    <property type="entry name" value="RIBONUCLEASE H1"/>
    <property type="match status" value="1"/>
</dbReference>
<dbReference type="Pfam" id="PF00075">
    <property type="entry name" value="RNase_H"/>
    <property type="match status" value="1"/>
</dbReference>
<dbReference type="SUPFAM" id="SSF53098">
    <property type="entry name" value="Ribonuclease H-like"/>
    <property type="match status" value="1"/>
</dbReference>
<dbReference type="PROSITE" id="PS50879">
    <property type="entry name" value="RNASE_H_1"/>
    <property type="match status" value="1"/>
</dbReference>
<gene>
    <name evidence="1" type="primary">rnhA</name>
    <name type="ordered locus">Csal_1942</name>
</gene>
<accession>Q1QW64</accession>
<reference key="1">
    <citation type="journal article" date="2011" name="Stand. Genomic Sci.">
        <title>Complete genome sequence of the halophilic and highly halotolerant Chromohalobacter salexigens type strain (1H11(T)).</title>
        <authorList>
            <person name="Copeland A."/>
            <person name="O'Connor K."/>
            <person name="Lucas S."/>
            <person name="Lapidus A."/>
            <person name="Berry K.W."/>
            <person name="Detter J.C."/>
            <person name="Del Rio T.G."/>
            <person name="Hammon N."/>
            <person name="Dalin E."/>
            <person name="Tice H."/>
            <person name="Pitluck S."/>
            <person name="Bruce D."/>
            <person name="Goodwin L."/>
            <person name="Han C."/>
            <person name="Tapia R."/>
            <person name="Saunders E."/>
            <person name="Schmutz J."/>
            <person name="Brettin T."/>
            <person name="Larimer F."/>
            <person name="Land M."/>
            <person name="Hauser L."/>
            <person name="Vargas C."/>
            <person name="Nieto J.J."/>
            <person name="Kyrpides N.C."/>
            <person name="Ivanova N."/>
            <person name="Goker M."/>
            <person name="Klenk H.P."/>
            <person name="Csonka L.N."/>
            <person name="Woyke T."/>
        </authorList>
    </citation>
    <scope>NUCLEOTIDE SEQUENCE [LARGE SCALE GENOMIC DNA]</scope>
    <source>
        <strain>ATCC BAA-138 / DSM 3043 / CIP 106854 / NCIMB 13768 / 1H11</strain>
    </source>
</reference>
<comment type="function">
    <text evidence="1">Endonuclease that specifically degrades the RNA of RNA-DNA hybrids.</text>
</comment>
<comment type="catalytic activity">
    <reaction evidence="1">
        <text>Endonucleolytic cleavage to 5'-phosphomonoester.</text>
        <dbReference type="EC" id="3.1.26.4"/>
    </reaction>
</comment>
<comment type="cofactor">
    <cofactor evidence="1">
        <name>Mg(2+)</name>
        <dbReference type="ChEBI" id="CHEBI:18420"/>
    </cofactor>
    <text evidence="1">Binds 1 Mg(2+) ion per subunit. May bind a second metal ion at a regulatory site, or after substrate binding.</text>
</comment>
<comment type="subunit">
    <text evidence="1">Monomer.</text>
</comment>
<comment type="subcellular location">
    <subcellularLocation>
        <location evidence="1">Cytoplasm</location>
    </subcellularLocation>
</comment>
<comment type="similarity">
    <text evidence="1">Belongs to the RNase H family.</text>
</comment>
<name>RNH_CHRSD</name>
<keyword id="KW-0963">Cytoplasm</keyword>
<keyword id="KW-0255">Endonuclease</keyword>
<keyword id="KW-0378">Hydrolase</keyword>
<keyword id="KW-0460">Magnesium</keyword>
<keyword id="KW-0479">Metal-binding</keyword>
<keyword id="KW-0540">Nuclease</keyword>
<keyword id="KW-1185">Reference proteome</keyword>